<gene>
    <name type="primary">DEFA</name>
</gene>
<organism>
    <name type="scientific">Antirrhinum majus</name>
    <name type="common">Garden snapdragon</name>
    <dbReference type="NCBI Taxonomy" id="4151"/>
    <lineage>
        <taxon>Eukaryota</taxon>
        <taxon>Viridiplantae</taxon>
        <taxon>Streptophyta</taxon>
        <taxon>Embryophyta</taxon>
        <taxon>Tracheophyta</taxon>
        <taxon>Spermatophyta</taxon>
        <taxon>Magnoliopsida</taxon>
        <taxon>eudicotyledons</taxon>
        <taxon>Gunneridae</taxon>
        <taxon>Pentapetalae</taxon>
        <taxon>asterids</taxon>
        <taxon>lamiids</taxon>
        <taxon>Lamiales</taxon>
        <taxon>Plantaginaceae</taxon>
        <taxon>Antirrhineae</taxon>
        <taxon>Antirrhinum</taxon>
    </lineage>
</organism>
<protein>
    <recommendedName>
        <fullName>Floral homeotic protein DEFICIENS</fullName>
    </recommendedName>
</protein>
<proteinExistence type="evidence at protein level"/>
<sequence>MARGKIQIKRIENQTNRQVTYSKRRNGLFKKAHELSVLCDAKVSIIMISSTQKLHEYISPTTATKQLFDQYQKAVGVDLWSSHYEKMQEHLKKLNEVNRNLRREIRQRMGESLNDLGYEQIVNLIEDMDNSLKLIRERKYKVISNQIDTSKKKVRNVEEIHRNLVLEFDARREDPHFGLVDNEGDYNSVLGFPNGGPRIIALRLPTNHHPTLHSGGGSDLTTFALLE</sequence>
<dbReference type="EMBL" id="X52023">
    <property type="protein sequence ID" value="CAA36268.1"/>
    <property type="molecule type" value="mRNA"/>
</dbReference>
<dbReference type="EMBL" id="X62810">
    <property type="protein sequence ID" value="CAA44629.1"/>
    <property type="molecule type" value="Genomic_DNA"/>
</dbReference>
<dbReference type="PIR" id="S12378">
    <property type="entry name" value="S12378"/>
</dbReference>
<dbReference type="SMR" id="P23706"/>
<dbReference type="IntAct" id="P23706">
    <property type="interactions" value="1"/>
</dbReference>
<dbReference type="GO" id="GO:0005634">
    <property type="term" value="C:nucleus"/>
    <property type="evidence" value="ECO:0007669"/>
    <property type="project" value="UniProtKB-SubCell"/>
</dbReference>
<dbReference type="GO" id="GO:0003700">
    <property type="term" value="F:DNA-binding transcription factor activity"/>
    <property type="evidence" value="ECO:0007669"/>
    <property type="project" value="InterPro"/>
</dbReference>
<dbReference type="GO" id="GO:0046983">
    <property type="term" value="F:protein dimerization activity"/>
    <property type="evidence" value="ECO:0007669"/>
    <property type="project" value="InterPro"/>
</dbReference>
<dbReference type="GO" id="GO:0000977">
    <property type="term" value="F:RNA polymerase II transcription regulatory region sequence-specific DNA binding"/>
    <property type="evidence" value="ECO:0007669"/>
    <property type="project" value="InterPro"/>
</dbReference>
<dbReference type="GO" id="GO:0045944">
    <property type="term" value="P:positive regulation of transcription by RNA polymerase II"/>
    <property type="evidence" value="ECO:0007669"/>
    <property type="project" value="InterPro"/>
</dbReference>
<dbReference type="CDD" id="cd00265">
    <property type="entry name" value="MADS_MEF2_like"/>
    <property type="match status" value="1"/>
</dbReference>
<dbReference type="FunFam" id="3.40.1810.10:FF:000016">
    <property type="entry name" value="MADS-box transcription factor 16"/>
    <property type="match status" value="1"/>
</dbReference>
<dbReference type="Gene3D" id="3.40.1810.10">
    <property type="entry name" value="Transcription factor, MADS-box"/>
    <property type="match status" value="1"/>
</dbReference>
<dbReference type="InterPro" id="IPR050142">
    <property type="entry name" value="MADS-box/MEF2_TF"/>
</dbReference>
<dbReference type="InterPro" id="IPR033896">
    <property type="entry name" value="MEF2-like_N"/>
</dbReference>
<dbReference type="InterPro" id="IPR002487">
    <property type="entry name" value="TF_Kbox"/>
</dbReference>
<dbReference type="InterPro" id="IPR002100">
    <property type="entry name" value="TF_MADSbox"/>
</dbReference>
<dbReference type="InterPro" id="IPR036879">
    <property type="entry name" value="TF_MADSbox_sf"/>
</dbReference>
<dbReference type="PANTHER" id="PTHR48019">
    <property type="entry name" value="SERUM RESPONSE FACTOR HOMOLOG"/>
    <property type="match status" value="1"/>
</dbReference>
<dbReference type="Pfam" id="PF01486">
    <property type="entry name" value="K-box"/>
    <property type="match status" value="1"/>
</dbReference>
<dbReference type="Pfam" id="PF00319">
    <property type="entry name" value="SRF-TF"/>
    <property type="match status" value="1"/>
</dbReference>
<dbReference type="PRINTS" id="PR00404">
    <property type="entry name" value="MADSDOMAIN"/>
</dbReference>
<dbReference type="SMART" id="SM00432">
    <property type="entry name" value="MADS"/>
    <property type="match status" value="1"/>
</dbReference>
<dbReference type="SUPFAM" id="SSF55455">
    <property type="entry name" value="SRF-like"/>
    <property type="match status" value="1"/>
</dbReference>
<dbReference type="PROSITE" id="PS51297">
    <property type="entry name" value="K_BOX"/>
    <property type="match status" value="1"/>
</dbReference>
<dbReference type="PROSITE" id="PS00350">
    <property type="entry name" value="MADS_BOX_1"/>
    <property type="match status" value="1"/>
</dbReference>
<dbReference type="PROSITE" id="PS50066">
    <property type="entry name" value="MADS_BOX_2"/>
    <property type="match status" value="1"/>
</dbReference>
<accession>P23706</accession>
<feature type="chain" id="PRO_0000199454" description="Floral homeotic protein DEFICIENS">
    <location>
        <begin position="1"/>
        <end position="227"/>
    </location>
</feature>
<feature type="domain" description="MADS-box" evidence="1">
    <location>
        <begin position="3"/>
        <end position="57"/>
    </location>
</feature>
<feature type="domain" description="K-box" evidence="2">
    <location>
        <begin position="84"/>
        <end position="174"/>
    </location>
</feature>
<reference key="1">
    <citation type="journal article" date="1990" name="EMBO J.">
        <title>Deficiens, a homeotic gene involved in the control of flower morphogenesis in Antirrhinum majus: the protein shows homology to transcription factors.</title>
        <authorList>
            <person name="Sommer H."/>
            <person name="Beltran J.-P."/>
            <person name="Huijser P."/>
            <person name="Pape H."/>
            <person name="Loennig W.-E."/>
            <person name="Saedler H."/>
            <person name="Schwarz-Sommer Z."/>
        </authorList>
    </citation>
    <scope>NUCLEOTIDE SEQUENCE</scope>
</reference>
<reference key="2">
    <citation type="journal article" date="1992" name="EMBO J.">
        <title>Characterization of the Antirrhinum floral homeotic MADS-box gene deficiens: evidence for DNA binding and autoregulation of its persistent expression throughout flower development.</title>
        <authorList>
            <person name="Schwarz-Sommer Z."/>
            <person name="Hue I."/>
            <person name="Huijser P."/>
            <person name="Flor P.J."/>
            <person name="Hansen R."/>
            <person name="Tetens F."/>
            <person name="Loennig W.-E."/>
            <person name="Saedler H."/>
            <person name="Sommer H."/>
        </authorList>
    </citation>
    <scope>NUCLEOTIDE SEQUENCE [GENOMIC DNA]</scope>
    <source>
        <strain>cv. Sippe 50</strain>
    </source>
</reference>
<evidence type="ECO:0000255" key="1">
    <source>
        <dbReference type="PROSITE-ProRule" id="PRU00251"/>
    </source>
</evidence>
<evidence type="ECO:0000255" key="2">
    <source>
        <dbReference type="PROSITE-ProRule" id="PRU00629"/>
    </source>
</evidence>
<keyword id="KW-0010">Activator</keyword>
<keyword id="KW-0217">Developmental protein</keyword>
<keyword id="KW-0238">DNA-binding</keyword>
<keyword id="KW-0539">Nucleus</keyword>
<keyword id="KW-0804">Transcription</keyword>
<keyword id="KW-0805">Transcription regulation</keyword>
<comment type="function">
    <text>Transcription factor involved in the genetic control of flower development. Acts in conjunction with GLOBOSA (glo).</text>
</comment>
<comment type="interaction">
    <interactant intactId="EBI-633463">
        <id>P23706</id>
    </interactant>
    <interactant intactId="EBI-633469">
        <id>Q03378</id>
        <label>GLO</label>
    </interactant>
    <organismsDiffer>false</organismsDiffer>
    <experiments>6</experiments>
</comment>
<comment type="subcellular location">
    <subcellularLocation>
        <location>Nucleus</location>
    </subcellularLocation>
</comment>
<comment type="miscellaneous">
    <text>Mutations in defA cause transformation of petals into sepals and stamina into carpels.</text>
</comment>
<name>DEFA_ANTMA</name>